<name>TCO1_HUMAN</name>
<proteinExistence type="evidence at protein level"/>
<dbReference type="EMBL" id="J05068">
    <property type="protein sequence ID" value="AAA61058.1"/>
    <property type="molecule type" value="mRNA"/>
</dbReference>
<dbReference type="EMBL" id="AK292990">
    <property type="protein sequence ID" value="BAF85679.1"/>
    <property type="molecule type" value="mRNA"/>
</dbReference>
<dbReference type="EMBL" id="AP002347">
    <property type="status" value="NOT_ANNOTATED_CDS"/>
    <property type="molecule type" value="Genomic_DNA"/>
</dbReference>
<dbReference type="EMBL" id="CH471076">
    <property type="protein sequence ID" value="EAW73861.1"/>
    <property type="molecule type" value="Genomic_DNA"/>
</dbReference>
<dbReference type="CCDS" id="CCDS7978.1"/>
<dbReference type="PIR" id="A34227">
    <property type="entry name" value="A34227"/>
</dbReference>
<dbReference type="RefSeq" id="NP_001053.2">
    <property type="nucleotide sequence ID" value="NM_001062.3"/>
</dbReference>
<dbReference type="PDB" id="4KKI">
    <property type="method" value="X-ray"/>
    <property type="resolution" value="2.35 A"/>
    <property type="chains" value="A=1-433"/>
</dbReference>
<dbReference type="PDB" id="4KKJ">
    <property type="method" value="X-ray"/>
    <property type="resolution" value="3.00 A"/>
    <property type="chains" value="A=1-433"/>
</dbReference>
<dbReference type="PDBsum" id="4KKI"/>
<dbReference type="PDBsum" id="4KKJ"/>
<dbReference type="SMR" id="P20061"/>
<dbReference type="BioGRID" id="112807">
    <property type="interactions" value="13"/>
</dbReference>
<dbReference type="FunCoup" id="P20061">
    <property type="interactions" value="74"/>
</dbReference>
<dbReference type="IntAct" id="P20061">
    <property type="interactions" value="9"/>
</dbReference>
<dbReference type="STRING" id="9606.ENSP00000257264"/>
<dbReference type="DrugBank" id="DB00115">
    <property type="generic name" value="Cyanocobalamin"/>
</dbReference>
<dbReference type="DrugBank" id="DB00200">
    <property type="generic name" value="Hydroxocobalamin"/>
</dbReference>
<dbReference type="DrugCentral" id="P20061"/>
<dbReference type="GlyConnect" id="1830">
    <property type="glycosylation" value="10 N-Linked glycans (2 sites)"/>
</dbReference>
<dbReference type="GlyCosmos" id="P20061">
    <property type="glycosylation" value="8 sites, 10 glycans"/>
</dbReference>
<dbReference type="GlyGen" id="P20061">
    <property type="glycosylation" value="9 sites, 11 N-linked glycans (3 sites)"/>
</dbReference>
<dbReference type="iPTMnet" id="P20061"/>
<dbReference type="PhosphoSitePlus" id="P20061"/>
<dbReference type="BioMuta" id="TCN1"/>
<dbReference type="DMDM" id="146345530"/>
<dbReference type="jPOST" id="P20061"/>
<dbReference type="MassIVE" id="P20061"/>
<dbReference type="PaxDb" id="9606-ENSP00000257264"/>
<dbReference type="PeptideAtlas" id="P20061"/>
<dbReference type="PRIDE" id="P20061"/>
<dbReference type="ProteomicsDB" id="53719"/>
<dbReference type="Antibodypedia" id="27835">
    <property type="antibodies" value="202 antibodies from 22 providers"/>
</dbReference>
<dbReference type="DNASU" id="6947"/>
<dbReference type="Ensembl" id="ENST00000257264.4">
    <property type="protein sequence ID" value="ENSP00000257264.3"/>
    <property type="gene ID" value="ENSG00000134827.8"/>
</dbReference>
<dbReference type="GeneID" id="6947"/>
<dbReference type="KEGG" id="hsa:6947"/>
<dbReference type="MANE-Select" id="ENST00000257264.4">
    <property type="protein sequence ID" value="ENSP00000257264.3"/>
    <property type="RefSeq nucleotide sequence ID" value="NM_001062.4"/>
    <property type="RefSeq protein sequence ID" value="NP_001053.2"/>
</dbReference>
<dbReference type="UCSC" id="uc001noj.3">
    <property type="organism name" value="human"/>
</dbReference>
<dbReference type="AGR" id="HGNC:11652"/>
<dbReference type="CTD" id="6947"/>
<dbReference type="DisGeNET" id="6947"/>
<dbReference type="GeneCards" id="TCN1"/>
<dbReference type="HGNC" id="HGNC:11652">
    <property type="gene designation" value="TCN1"/>
</dbReference>
<dbReference type="HPA" id="ENSG00000134827">
    <property type="expression patterns" value="Tissue enhanced (bone marrow, gallbladder, salivary gland)"/>
</dbReference>
<dbReference type="MalaCards" id="TCN1"/>
<dbReference type="MIM" id="189905">
    <property type="type" value="gene"/>
</dbReference>
<dbReference type="neXtProt" id="NX_P20061"/>
<dbReference type="OpenTargets" id="ENSG00000134827"/>
<dbReference type="PharmGKB" id="PA36403"/>
<dbReference type="VEuPathDB" id="HostDB:ENSG00000134827"/>
<dbReference type="eggNOG" id="ENOG502QT7B">
    <property type="taxonomic scope" value="Eukaryota"/>
</dbReference>
<dbReference type="GeneTree" id="ENSGT00530000063370"/>
<dbReference type="HOGENOM" id="CLU_052188_0_0_1"/>
<dbReference type="InParanoid" id="P20061"/>
<dbReference type="OMA" id="TMNQSKY"/>
<dbReference type="OrthoDB" id="6343110at2759"/>
<dbReference type="PAN-GO" id="P20061">
    <property type="GO annotations" value="3 GO annotations based on evolutionary models"/>
</dbReference>
<dbReference type="PhylomeDB" id="P20061"/>
<dbReference type="TreeFam" id="TF333092"/>
<dbReference type="PathwayCommons" id="P20061"/>
<dbReference type="Reactome" id="R-HSA-6798695">
    <property type="pathway name" value="Neutrophil degranulation"/>
</dbReference>
<dbReference type="Reactome" id="R-HSA-9758881">
    <property type="pathway name" value="Uptake of dietary cobalamins into enterocytes"/>
</dbReference>
<dbReference type="Reactome" id="R-HSA-9758890">
    <property type="pathway name" value="Transport of RCbl within the body"/>
</dbReference>
<dbReference type="SignaLink" id="P20061"/>
<dbReference type="BioGRID-ORCS" id="6947">
    <property type="hits" value="11 hits in 1160 CRISPR screens"/>
</dbReference>
<dbReference type="ChiTaRS" id="TCN1">
    <property type="organism name" value="human"/>
</dbReference>
<dbReference type="EvolutionaryTrace" id="P20061"/>
<dbReference type="GeneWiki" id="Haptocorrin"/>
<dbReference type="GenomeRNAi" id="6947"/>
<dbReference type="Pharos" id="P20061">
    <property type="development level" value="Tbio"/>
</dbReference>
<dbReference type="PRO" id="PR:P20061"/>
<dbReference type="Proteomes" id="UP000005640">
    <property type="component" value="Chromosome 11"/>
</dbReference>
<dbReference type="RNAct" id="P20061">
    <property type="molecule type" value="protein"/>
</dbReference>
<dbReference type="Bgee" id="ENSG00000134827">
    <property type="expression patterns" value="Expressed in pancreatic ductal cell and 125 other cell types or tissues"/>
</dbReference>
<dbReference type="GO" id="GO:0005576">
    <property type="term" value="C:extracellular region"/>
    <property type="evidence" value="ECO:0000304"/>
    <property type="project" value="Reactome"/>
</dbReference>
<dbReference type="GO" id="GO:0005615">
    <property type="term" value="C:extracellular space"/>
    <property type="evidence" value="ECO:0007005"/>
    <property type="project" value="UniProtKB"/>
</dbReference>
<dbReference type="GO" id="GO:0035580">
    <property type="term" value="C:specific granule lumen"/>
    <property type="evidence" value="ECO:0000304"/>
    <property type="project" value="Reactome"/>
</dbReference>
<dbReference type="GO" id="GO:1904724">
    <property type="term" value="C:tertiary granule lumen"/>
    <property type="evidence" value="ECO:0000304"/>
    <property type="project" value="Reactome"/>
</dbReference>
<dbReference type="GO" id="GO:0140355">
    <property type="term" value="F:cargo receptor ligand activity"/>
    <property type="evidence" value="ECO:0000269"/>
    <property type="project" value="Reactome"/>
</dbReference>
<dbReference type="GO" id="GO:0031419">
    <property type="term" value="F:cobalamin binding"/>
    <property type="evidence" value="ECO:0000318"/>
    <property type="project" value="GO_Central"/>
</dbReference>
<dbReference type="GO" id="GO:0140313">
    <property type="term" value="F:molecular sequestering activity"/>
    <property type="evidence" value="ECO:0000269"/>
    <property type="project" value="Reactome"/>
</dbReference>
<dbReference type="GO" id="GO:0015889">
    <property type="term" value="P:cobalamin transport"/>
    <property type="evidence" value="ECO:0000318"/>
    <property type="project" value="GO_Central"/>
</dbReference>
<dbReference type="GO" id="GO:0006824">
    <property type="term" value="P:cobalt ion transport"/>
    <property type="evidence" value="ECO:0007669"/>
    <property type="project" value="UniProtKB-KW"/>
</dbReference>
<dbReference type="DisProt" id="DP02797"/>
<dbReference type="FunFam" id="1.50.10.20:FF:000048">
    <property type="entry name" value="Transcobalamin 1"/>
    <property type="match status" value="1"/>
</dbReference>
<dbReference type="FunFam" id="2.170.130.30:FF:000003">
    <property type="entry name" value="Transcobalamin 1"/>
    <property type="match status" value="1"/>
</dbReference>
<dbReference type="Gene3D" id="1.50.10.20">
    <property type="match status" value="1"/>
</dbReference>
<dbReference type="Gene3D" id="2.170.130.30">
    <property type="match status" value="1"/>
</dbReference>
<dbReference type="InterPro" id="IPR002157">
    <property type="entry name" value="Cbl-bd_prot"/>
</dbReference>
<dbReference type="InterPro" id="IPR051588">
    <property type="entry name" value="Cobalamin_Transport"/>
</dbReference>
<dbReference type="InterPro" id="IPR027954">
    <property type="entry name" value="Transcobalamin-like_C"/>
</dbReference>
<dbReference type="PANTHER" id="PTHR10559:SF13">
    <property type="entry name" value="TRANSCOBALAMIN-1"/>
    <property type="match status" value="1"/>
</dbReference>
<dbReference type="PANTHER" id="PTHR10559">
    <property type="entry name" value="TRANSCOBALAMIN-1/GASTRIC INTRINSIC FACTOR"/>
    <property type="match status" value="1"/>
</dbReference>
<dbReference type="Pfam" id="PF01122">
    <property type="entry name" value="Cobalamin_bind"/>
    <property type="match status" value="1"/>
</dbReference>
<dbReference type="Pfam" id="PF14478">
    <property type="entry name" value="DUF4430"/>
    <property type="match status" value="1"/>
</dbReference>
<dbReference type="PROSITE" id="PS00468">
    <property type="entry name" value="COBALAMIN_BINDING"/>
    <property type="match status" value="1"/>
</dbReference>
<gene>
    <name type="primary">TCN1</name>
    <name type="synonym">TC1</name>
</gene>
<comment type="function">
    <text>Binds vitamin B12 with femtomolar affinity and protects it from the acidic environment of the stomach.</text>
</comment>
<comment type="interaction">
    <interactant intactId="EBI-2557232">
        <id>P20061</id>
    </interactant>
    <interactant intactId="EBI-1055254">
        <id>Q8WXH2</id>
        <label>JPH3</label>
    </interactant>
    <organismsDiffer>false</organismsDiffer>
    <experiments>3</experiments>
</comment>
<comment type="subcellular location">
    <subcellularLocation>
        <location>Secreted</location>
    </subcellularLocation>
</comment>
<comment type="tissue specificity">
    <text evidence="5">Produced by the salivary glands of the oral cavity, in response to ingestion of food. Major constituent of secondary granules in neutrophils.</text>
</comment>
<comment type="PTM">
    <text>Contains about 30% carbohydrates.</text>
</comment>
<comment type="similarity">
    <text evidence="6">Belongs to the eukaryotic cobalamin transport proteins family.</text>
</comment>
<evidence type="ECO:0000255" key="1"/>
<evidence type="ECO:0000269" key="2">
    <source>
    </source>
</evidence>
<evidence type="ECO:0000269" key="3">
    <source>
    </source>
</evidence>
<evidence type="ECO:0000269" key="4">
    <source>
    </source>
</evidence>
<evidence type="ECO:0000269" key="5">
    <source>
    </source>
</evidence>
<evidence type="ECO:0000305" key="6"/>
<evidence type="ECO:0007744" key="7">
    <source>
        <dbReference type="PDB" id="4KKI"/>
    </source>
</evidence>
<evidence type="ECO:0007744" key="8">
    <source>
        <dbReference type="PDB" id="4KKJ"/>
    </source>
</evidence>
<evidence type="ECO:0007829" key="9">
    <source>
        <dbReference type="PDB" id="4KKI"/>
    </source>
</evidence>
<evidence type="ECO:0007829" key="10">
    <source>
        <dbReference type="PDB" id="4KKJ"/>
    </source>
</evidence>
<feature type="signal peptide">
    <location>
        <begin position="1"/>
        <end position="23"/>
    </location>
</feature>
<feature type="chain" id="PRO_0000005561" description="Transcobalamin-1">
    <location>
        <begin position="24"/>
        <end position="433"/>
    </location>
</feature>
<feature type="region of interest" description="Globular N-terminal alpha domain">
    <location>
        <begin position="24"/>
        <end position="310"/>
    </location>
</feature>
<feature type="region of interest" description="Flexible linker">
    <location>
        <begin position="311"/>
        <end position="332"/>
    </location>
</feature>
<feature type="region of interest" description="Globular C-terminal beta domain">
    <location>
        <begin position="333"/>
        <end position="433"/>
    </location>
</feature>
<feature type="binding site" evidence="4 7">
    <location>
        <begin position="142"/>
        <end position="146"/>
    </location>
    <ligand>
        <name>cyanocob(III)alamin</name>
        <dbReference type="ChEBI" id="CHEBI:17439"/>
    </ligand>
</feature>
<feature type="binding site" evidence="4 7">
    <location>
        <position position="186"/>
    </location>
    <ligand>
        <name>cyanocob(III)alamin</name>
        <dbReference type="ChEBI" id="CHEBI:17439"/>
    </ligand>
</feature>
<feature type="binding site" evidence="4 7">
    <location>
        <position position="240"/>
    </location>
    <ligand>
        <name>cyanocob(III)alamin</name>
        <dbReference type="ChEBI" id="CHEBI:17439"/>
    </ligand>
</feature>
<feature type="binding site" evidence="4 7">
    <location>
        <position position="289"/>
    </location>
    <ligand>
        <name>cyanocob(III)alamin</name>
        <dbReference type="ChEBI" id="CHEBI:17439"/>
    </ligand>
</feature>
<feature type="binding site" evidence="4 7">
    <location>
        <begin position="385"/>
        <end position="386"/>
    </location>
    <ligand>
        <name>cyanocob(III)alamin</name>
        <dbReference type="ChEBI" id="CHEBI:17439"/>
    </ligand>
</feature>
<feature type="binding site" evidence="4 7">
    <location>
        <begin position="402"/>
        <end position="404"/>
    </location>
    <ligand>
        <name>cyanocob(III)alamin</name>
        <dbReference type="ChEBI" id="CHEBI:17439"/>
    </ligand>
</feature>
<feature type="binding site" evidence="4 7">
    <location>
        <position position="411"/>
    </location>
    <ligand>
        <name>cyanocob(III)alamin</name>
        <dbReference type="ChEBI" id="CHEBI:17439"/>
    </ligand>
</feature>
<feature type="binding site" evidence="4 7">
    <location>
        <position position="433"/>
    </location>
    <ligand>
        <name>cyanocob(III)alamin</name>
        <dbReference type="ChEBI" id="CHEBI:17439"/>
    </ligand>
</feature>
<feature type="glycosylation site" description="N-linked (GlcNAc...) asparagine" evidence="1">
    <location>
        <position position="160"/>
    </location>
</feature>
<feature type="glycosylation site" description="N-linked (GlcNAc...) asparagine" evidence="2 3 4">
    <location>
        <position position="216"/>
    </location>
</feature>
<feature type="glycosylation site" description="N-linked (GlcNAc...) asparagine" evidence="4">
    <location>
        <position position="316"/>
    </location>
</feature>
<feature type="glycosylation site" description="N-linked (GlcNAc...) asparagine" evidence="4">
    <location>
        <position position="337"/>
    </location>
</feature>
<feature type="glycosylation site" description="N-linked (GlcNAc...) asparagine" evidence="4">
    <location>
        <position position="343"/>
    </location>
</feature>
<feature type="glycosylation site" description="N-linked (GlcNAc...) asparagine" evidence="4">
    <location>
        <position position="349"/>
    </location>
</feature>
<feature type="glycosylation site" description="N-linked (GlcNAc...) asparagine" evidence="4">
    <location>
        <position position="354"/>
    </location>
</feature>
<feature type="glycosylation site" description="N-linked (GlcNAc...) asparagine" evidence="3 4">
    <location>
        <position position="369"/>
    </location>
</feature>
<feature type="disulfide bond" evidence="4">
    <location>
        <begin position="26"/>
        <end position="265"/>
    </location>
</feature>
<feature type="disulfide bond" evidence="4">
    <location>
        <begin position="105"/>
        <end position="308"/>
    </location>
</feature>
<feature type="disulfide bond" evidence="4">
    <location>
        <begin position="155"/>
        <end position="197"/>
    </location>
</feature>
<feature type="disulfide bond" evidence="4">
    <location>
        <begin position="388"/>
        <end position="393"/>
    </location>
</feature>
<feature type="sequence variant" id="VAR_031923" description="In dbSNP:rs34528912.">
    <original>R</original>
    <variation>H</variation>
    <location>
        <position position="35"/>
    </location>
</feature>
<feature type="sequence variant" id="VAR_031924" description="In dbSNP:rs34324219.">
    <original>D</original>
    <variation>Y</variation>
    <location>
        <position position="301"/>
    </location>
</feature>
<feature type="sequence conflict" description="In Ref. 1; AAA61058." evidence="6" ref="1">
    <original>I</original>
    <variation>T</variation>
    <location>
        <position position="119"/>
    </location>
</feature>
<feature type="helix" evidence="9">
    <location>
        <begin position="30"/>
        <end position="36"/>
    </location>
</feature>
<feature type="helix" evidence="9">
    <location>
        <begin position="37"/>
        <end position="45"/>
    </location>
</feature>
<feature type="helix" evidence="9">
    <location>
        <begin position="46"/>
        <end position="48"/>
    </location>
</feature>
<feature type="strand" evidence="10">
    <location>
        <begin position="50"/>
        <end position="52"/>
    </location>
</feature>
<feature type="helix" evidence="9">
    <location>
        <begin position="55"/>
        <end position="63"/>
    </location>
</feature>
<feature type="helix" evidence="9">
    <location>
        <begin position="69"/>
        <end position="85"/>
    </location>
</feature>
<feature type="turn" evidence="9">
    <location>
        <begin position="87"/>
        <end position="89"/>
    </location>
</feature>
<feature type="helix" evidence="9">
    <location>
        <begin position="92"/>
        <end position="102"/>
    </location>
</feature>
<feature type="helix" evidence="9">
    <location>
        <begin position="108"/>
        <end position="110"/>
    </location>
</feature>
<feature type="helix" evidence="9">
    <location>
        <begin position="111"/>
        <end position="115"/>
    </location>
</feature>
<feature type="helix" evidence="9">
    <location>
        <begin position="118"/>
        <end position="135"/>
    </location>
</feature>
<feature type="turn" evidence="9">
    <location>
        <begin position="136"/>
        <end position="138"/>
    </location>
</feature>
<feature type="helix" evidence="9">
    <location>
        <begin position="144"/>
        <end position="156"/>
    </location>
</feature>
<feature type="helix" evidence="9">
    <location>
        <begin position="163"/>
        <end position="169"/>
    </location>
</feature>
<feature type="helix" evidence="9">
    <location>
        <begin position="175"/>
        <end position="177"/>
    </location>
</feature>
<feature type="helix" evidence="9">
    <location>
        <begin position="185"/>
        <end position="203"/>
    </location>
</feature>
<feature type="helix" evidence="9">
    <location>
        <begin position="213"/>
        <end position="229"/>
    </location>
</feature>
<feature type="strand" evidence="9">
    <location>
        <begin position="238"/>
        <end position="240"/>
    </location>
</feature>
<feature type="turn" evidence="9">
    <location>
        <begin position="241"/>
        <end position="243"/>
    </location>
</feature>
<feature type="helix" evidence="9">
    <location>
        <begin position="244"/>
        <end position="252"/>
    </location>
</feature>
<feature type="helix" evidence="9">
    <location>
        <begin position="255"/>
        <end position="257"/>
    </location>
</feature>
<feature type="turn" evidence="9">
    <location>
        <begin position="260"/>
        <end position="262"/>
    </location>
</feature>
<feature type="helix" evidence="9">
    <location>
        <begin position="265"/>
        <end position="277"/>
    </location>
</feature>
<feature type="turn" evidence="9">
    <location>
        <begin position="278"/>
        <end position="281"/>
    </location>
</feature>
<feature type="helix" evidence="9">
    <location>
        <begin position="284"/>
        <end position="294"/>
    </location>
</feature>
<feature type="helix" evidence="9">
    <location>
        <begin position="299"/>
        <end position="301"/>
    </location>
</feature>
<feature type="strand" evidence="9">
    <location>
        <begin position="333"/>
        <end position="353"/>
    </location>
</feature>
<feature type="helix" evidence="9">
    <location>
        <begin position="358"/>
        <end position="368"/>
    </location>
</feature>
<feature type="helix" evidence="9">
    <location>
        <begin position="370"/>
        <end position="373"/>
    </location>
</feature>
<feature type="strand" evidence="9">
    <location>
        <begin position="375"/>
        <end position="379"/>
    </location>
</feature>
<feature type="strand" evidence="9">
    <location>
        <begin position="381"/>
        <end position="389"/>
    </location>
</feature>
<feature type="turn" evidence="9">
    <location>
        <begin position="396"/>
        <end position="399"/>
    </location>
</feature>
<feature type="strand" evidence="9">
    <location>
        <begin position="400"/>
        <end position="406"/>
    </location>
</feature>
<feature type="turn" evidence="9">
    <location>
        <begin position="415"/>
        <end position="417"/>
    </location>
</feature>
<feature type="strand" evidence="9">
    <location>
        <begin position="426"/>
        <end position="432"/>
    </location>
</feature>
<reference key="1">
    <citation type="journal article" date="1989" name="J. Biol. Chem.">
        <title>Structure of the cDNA encoding transcobalamin I, a neutrophil granule protein.</title>
        <authorList>
            <person name="Johnston J."/>
            <person name="Bollekens J."/>
            <person name="Allen R.H."/>
            <person name="Berliner N."/>
        </authorList>
    </citation>
    <scope>NUCLEOTIDE SEQUENCE [MRNA]</scope>
    <scope>TISSUE SPECIFICITY</scope>
</reference>
<reference key="2">
    <citation type="journal article" date="2004" name="Nat. Genet.">
        <title>Complete sequencing and characterization of 21,243 full-length human cDNAs.</title>
        <authorList>
            <person name="Ota T."/>
            <person name="Suzuki Y."/>
            <person name="Nishikawa T."/>
            <person name="Otsuki T."/>
            <person name="Sugiyama T."/>
            <person name="Irie R."/>
            <person name="Wakamatsu A."/>
            <person name="Hayashi K."/>
            <person name="Sato H."/>
            <person name="Nagai K."/>
            <person name="Kimura K."/>
            <person name="Makita H."/>
            <person name="Sekine M."/>
            <person name="Obayashi M."/>
            <person name="Nishi T."/>
            <person name="Shibahara T."/>
            <person name="Tanaka T."/>
            <person name="Ishii S."/>
            <person name="Yamamoto J."/>
            <person name="Saito K."/>
            <person name="Kawai Y."/>
            <person name="Isono Y."/>
            <person name="Nakamura Y."/>
            <person name="Nagahari K."/>
            <person name="Murakami K."/>
            <person name="Yasuda T."/>
            <person name="Iwayanagi T."/>
            <person name="Wagatsuma M."/>
            <person name="Shiratori A."/>
            <person name="Sudo H."/>
            <person name="Hosoiri T."/>
            <person name="Kaku Y."/>
            <person name="Kodaira H."/>
            <person name="Kondo H."/>
            <person name="Sugawara M."/>
            <person name="Takahashi M."/>
            <person name="Kanda K."/>
            <person name="Yokoi T."/>
            <person name="Furuya T."/>
            <person name="Kikkawa E."/>
            <person name="Omura Y."/>
            <person name="Abe K."/>
            <person name="Kamihara K."/>
            <person name="Katsuta N."/>
            <person name="Sato K."/>
            <person name="Tanikawa M."/>
            <person name="Yamazaki M."/>
            <person name="Ninomiya K."/>
            <person name="Ishibashi T."/>
            <person name="Yamashita H."/>
            <person name="Murakawa K."/>
            <person name="Fujimori K."/>
            <person name="Tanai H."/>
            <person name="Kimata M."/>
            <person name="Watanabe M."/>
            <person name="Hiraoka S."/>
            <person name="Chiba Y."/>
            <person name="Ishida S."/>
            <person name="Ono Y."/>
            <person name="Takiguchi S."/>
            <person name="Watanabe S."/>
            <person name="Yosida M."/>
            <person name="Hotuta T."/>
            <person name="Kusano J."/>
            <person name="Kanehori K."/>
            <person name="Takahashi-Fujii A."/>
            <person name="Hara H."/>
            <person name="Tanase T.-O."/>
            <person name="Nomura Y."/>
            <person name="Togiya S."/>
            <person name="Komai F."/>
            <person name="Hara R."/>
            <person name="Takeuchi K."/>
            <person name="Arita M."/>
            <person name="Imose N."/>
            <person name="Musashino K."/>
            <person name="Yuuki H."/>
            <person name="Oshima A."/>
            <person name="Sasaki N."/>
            <person name="Aotsuka S."/>
            <person name="Yoshikawa Y."/>
            <person name="Matsunawa H."/>
            <person name="Ichihara T."/>
            <person name="Shiohata N."/>
            <person name="Sano S."/>
            <person name="Moriya S."/>
            <person name="Momiyama H."/>
            <person name="Satoh N."/>
            <person name="Takami S."/>
            <person name="Terashima Y."/>
            <person name="Suzuki O."/>
            <person name="Nakagawa S."/>
            <person name="Senoh A."/>
            <person name="Mizoguchi H."/>
            <person name="Goto Y."/>
            <person name="Shimizu F."/>
            <person name="Wakebe H."/>
            <person name="Hishigaki H."/>
            <person name="Watanabe T."/>
            <person name="Sugiyama A."/>
            <person name="Takemoto M."/>
            <person name="Kawakami B."/>
            <person name="Yamazaki M."/>
            <person name="Watanabe K."/>
            <person name="Kumagai A."/>
            <person name="Itakura S."/>
            <person name="Fukuzumi Y."/>
            <person name="Fujimori Y."/>
            <person name="Komiyama M."/>
            <person name="Tashiro H."/>
            <person name="Tanigami A."/>
            <person name="Fujiwara T."/>
            <person name="Ono T."/>
            <person name="Yamada K."/>
            <person name="Fujii Y."/>
            <person name="Ozaki K."/>
            <person name="Hirao M."/>
            <person name="Ohmori Y."/>
            <person name="Kawabata A."/>
            <person name="Hikiji T."/>
            <person name="Kobatake N."/>
            <person name="Inagaki H."/>
            <person name="Ikema Y."/>
            <person name="Okamoto S."/>
            <person name="Okitani R."/>
            <person name="Kawakami T."/>
            <person name="Noguchi S."/>
            <person name="Itoh T."/>
            <person name="Shigeta K."/>
            <person name="Senba T."/>
            <person name="Matsumura K."/>
            <person name="Nakajima Y."/>
            <person name="Mizuno T."/>
            <person name="Morinaga M."/>
            <person name="Sasaki M."/>
            <person name="Togashi T."/>
            <person name="Oyama M."/>
            <person name="Hata H."/>
            <person name="Watanabe M."/>
            <person name="Komatsu T."/>
            <person name="Mizushima-Sugano J."/>
            <person name="Satoh T."/>
            <person name="Shirai Y."/>
            <person name="Takahashi Y."/>
            <person name="Nakagawa K."/>
            <person name="Okumura K."/>
            <person name="Nagase T."/>
            <person name="Nomura N."/>
            <person name="Kikuchi H."/>
            <person name="Masuho Y."/>
            <person name="Yamashita R."/>
            <person name="Nakai K."/>
            <person name="Yada T."/>
            <person name="Nakamura Y."/>
            <person name="Ohara O."/>
            <person name="Isogai T."/>
            <person name="Sugano S."/>
        </authorList>
    </citation>
    <scope>NUCLEOTIDE SEQUENCE [LARGE SCALE MRNA]</scope>
    <source>
        <tissue>Trachea</tissue>
    </source>
</reference>
<reference key="3">
    <citation type="journal article" date="2006" name="Nature">
        <title>Human chromosome 11 DNA sequence and analysis including novel gene identification.</title>
        <authorList>
            <person name="Taylor T.D."/>
            <person name="Noguchi H."/>
            <person name="Totoki Y."/>
            <person name="Toyoda A."/>
            <person name="Kuroki Y."/>
            <person name="Dewar K."/>
            <person name="Lloyd C."/>
            <person name="Itoh T."/>
            <person name="Takeda T."/>
            <person name="Kim D.-W."/>
            <person name="She X."/>
            <person name="Barlow K.F."/>
            <person name="Bloom T."/>
            <person name="Bruford E."/>
            <person name="Chang J.L."/>
            <person name="Cuomo C.A."/>
            <person name="Eichler E."/>
            <person name="FitzGerald M.G."/>
            <person name="Jaffe D.B."/>
            <person name="LaButti K."/>
            <person name="Nicol R."/>
            <person name="Park H.-S."/>
            <person name="Seaman C."/>
            <person name="Sougnez C."/>
            <person name="Yang X."/>
            <person name="Zimmer A.R."/>
            <person name="Zody M.C."/>
            <person name="Birren B.W."/>
            <person name="Nusbaum C."/>
            <person name="Fujiyama A."/>
            <person name="Hattori M."/>
            <person name="Rogers J."/>
            <person name="Lander E.S."/>
            <person name="Sakaki Y."/>
        </authorList>
    </citation>
    <scope>NUCLEOTIDE SEQUENCE [LARGE SCALE GENOMIC DNA]</scope>
</reference>
<reference key="4">
    <citation type="submission" date="2005-07" db="EMBL/GenBank/DDBJ databases">
        <authorList>
            <person name="Mural R.J."/>
            <person name="Istrail S."/>
            <person name="Sutton G.G."/>
            <person name="Florea L."/>
            <person name="Halpern A.L."/>
            <person name="Mobarry C.M."/>
            <person name="Lippert R."/>
            <person name="Walenz B."/>
            <person name="Shatkay H."/>
            <person name="Dew I."/>
            <person name="Miller J.R."/>
            <person name="Flanigan M.J."/>
            <person name="Edwards N.J."/>
            <person name="Bolanos R."/>
            <person name="Fasulo D."/>
            <person name="Halldorsson B.V."/>
            <person name="Hannenhalli S."/>
            <person name="Turner R."/>
            <person name="Yooseph S."/>
            <person name="Lu F."/>
            <person name="Nusskern D.R."/>
            <person name="Shue B.C."/>
            <person name="Zheng X.H."/>
            <person name="Zhong F."/>
            <person name="Delcher A.L."/>
            <person name="Huson D.H."/>
            <person name="Kravitz S.A."/>
            <person name="Mouchard L."/>
            <person name="Reinert K."/>
            <person name="Remington K.A."/>
            <person name="Clark A.G."/>
            <person name="Waterman M.S."/>
            <person name="Eichler E.E."/>
            <person name="Adams M.D."/>
            <person name="Hunkapiller M.W."/>
            <person name="Myers E.W."/>
            <person name="Venter J.C."/>
        </authorList>
    </citation>
    <scope>NUCLEOTIDE SEQUENCE [LARGE SCALE GENOMIC DNA]</scope>
</reference>
<reference key="5">
    <citation type="journal article" date="2005" name="J. Proteome Res.">
        <title>Human plasma N-glycoproteome analysis by immunoaffinity subtraction, hydrazide chemistry, and mass spectrometry.</title>
        <authorList>
            <person name="Liu T."/>
            <person name="Qian W.-J."/>
            <person name="Gritsenko M.A."/>
            <person name="Camp D.G. II"/>
            <person name="Monroe M.E."/>
            <person name="Moore R.J."/>
            <person name="Smith R.D."/>
        </authorList>
    </citation>
    <scope>GLYCOSYLATION [LARGE SCALE ANALYSIS] AT ASN-216</scope>
    <source>
        <tissue>Plasma</tissue>
    </source>
</reference>
<reference key="6">
    <citation type="journal article" date="2006" name="J. Proteome Res.">
        <title>Identification of N-linked glycoproteins in human saliva by glycoprotein capture and mass spectrometry.</title>
        <authorList>
            <person name="Ramachandran P."/>
            <person name="Boontheung P."/>
            <person name="Xie Y."/>
            <person name="Sondej M."/>
            <person name="Wong D.T."/>
            <person name="Loo J.A."/>
        </authorList>
    </citation>
    <scope>GLYCOSYLATION [LARGE SCALE ANALYSIS] AT ASN-216 AND ASN-369</scope>
    <source>
        <tissue>Saliva</tissue>
    </source>
</reference>
<reference evidence="7 8" key="7">
    <citation type="journal article" date="2013" name="J. Biol. Chem.">
        <title>Structural basis for universal corrinoid recognition by the cobalamin transport protein haptocorrin.</title>
        <authorList>
            <person name="Furger E."/>
            <person name="Frei D.C."/>
            <person name="Schibli R."/>
            <person name="Fischer E."/>
            <person name="Prota A.E."/>
        </authorList>
    </citation>
    <scope>X-RAY CRYSTALLOGRAPHY (2.35 ANGSTROMS) IN COMPLEX WITH CYANOCOBALAMIN</scope>
    <scope>DISULFIDE BONDS</scope>
    <scope>COBALAMIN-BINDING SITES</scope>
    <scope>GLYCOSYLATION AT ASN-216; ASN-316; ASN-337; ASN-343; ASN-349; ASN-354 AND ASN-369</scope>
</reference>
<protein>
    <recommendedName>
        <fullName>Transcobalamin-1</fullName>
        <shortName>TC-1</shortName>
    </recommendedName>
    <alternativeName>
        <fullName>Haptocorrin</fullName>
        <shortName>HC</shortName>
    </alternativeName>
    <alternativeName>
        <fullName>Protein R</fullName>
    </alternativeName>
    <alternativeName>
        <fullName>Transcobalamin I</fullName>
        <shortName>TC I</shortName>
        <shortName>TCI</shortName>
    </alternativeName>
</protein>
<sequence length="433" mass="48207">MRQSHQLPLVGLLLFSFIPSQLCEICEVSEENYIRLKPLLNTMIQSNYNRGTSAVNVVLSLKLVGIQIQTLMQKMIQQIKYNVKSRLSDVSSGELALIILALGVCRNAEENLIYDYHLIDKLENKFQAEIENMEAHNGTPLTNYYQLSLDVLALCLFNGNYSTAEVVNHFTPENKNYYFGSQFSVDTGAMAVLALTCVKKSLINGQIKADEGSLKNISIYTKSLVEKILSEKKENGLIGNTFSTGEAMQALFVSSDYYNENDWNCQQTLNTVLTEISQGAFSNPNAAAQVLPALMGKTFLDINKDSSCVSASGNFNISADEPITVTPPDSQSYISVNYSVRINETYFTNVTVLNGSVFLSVMEKAQKMNDTIFGFTMEERSWGPYITCIQGLCANNNDRTYWELLSGGEPLSQGAGSYVVRNGENLEVRWSKY</sequence>
<accession>P20061</accession>
<accession>A8KAC5</accession>
<accession>Q8WV77</accession>
<organism>
    <name type="scientific">Homo sapiens</name>
    <name type="common">Human</name>
    <dbReference type="NCBI Taxonomy" id="9606"/>
    <lineage>
        <taxon>Eukaryota</taxon>
        <taxon>Metazoa</taxon>
        <taxon>Chordata</taxon>
        <taxon>Craniata</taxon>
        <taxon>Vertebrata</taxon>
        <taxon>Euteleostomi</taxon>
        <taxon>Mammalia</taxon>
        <taxon>Eutheria</taxon>
        <taxon>Euarchontoglires</taxon>
        <taxon>Primates</taxon>
        <taxon>Haplorrhini</taxon>
        <taxon>Catarrhini</taxon>
        <taxon>Hominidae</taxon>
        <taxon>Homo</taxon>
    </lineage>
</organism>
<keyword id="KW-0002">3D-structure</keyword>
<keyword id="KW-0170">Cobalt</keyword>
<keyword id="KW-0171">Cobalt transport</keyword>
<keyword id="KW-1015">Disulfide bond</keyword>
<keyword id="KW-0325">Glycoprotein</keyword>
<keyword id="KW-0406">Ion transport</keyword>
<keyword id="KW-1267">Proteomics identification</keyword>
<keyword id="KW-1185">Reference proteome</keyword>
<keyword id="KW-0964">Secreted</keyword>
<keyword id="KW-0732">Signal</keyword>
<keyword id="KW-0813">Transport</keyword>